<dbReference type="EC" id="3.4.21.92" evidence="1"/>
<dbReference type="EMBL" id="AE017194">
    <property type="protein sequence ID" value="AAS41731.1"/>
    <property type="molecule type" value="Genomic_DNA"/>
</dbReference>
<dbReference type="MEROPS" id="S14.001"/>
<dbReference type="KEGG" id="bca:BCE_2819"/>
<dbReference type="HOGENOM" id="CLU_058707_3_2_9"/>
<dbReference type="Proteomes" id="UP000002527">
    <property type="component" value="Chromosome"/>
</dbReference>
<dbReference type="GO" id="GO:0005737">
    <property type="term" value="C:cytoplasm"/>
    <property type="evidence" value="ECO:0007669"/>
    <property type="project" value="UniProtKB-SubCell"/>
</dbReference>
<dbReference type="GO" id="GO:0009368">
    <property type="term" value="C:endopeptidase Clp complex"/>
    <property type="evidence" value="ECO:0007669"/>
    <property type="project" value="TreeGrafter"/>
</dbReference>
<dbReference type="GO" id="GO:0004176">
    <property type="term" value="F:ATP-dependent peptidase activity"/>
    <property type="evidence" value="ECO:0007669"/>
    <property type="project" value="InterPro"/>
</dbReference>
<dbReference type="GO" id="GO:0051117">
    <property type="term" value="F:ATPase binding"/>
    <property type="evidence" value="ECO:0007669"/>
    <property type="project" value="TreeGrafter"/>
</dbReference>
<dbReference type="GO" id="GO:0004252">
    <property type="term" value="F:serine-type endopeptidase activity"/>
    <property type="evidence" value="ECO:0007669"/>
    <property type="project" value="UniProtKB-UniRule"/>
</dbReference>
<dbReference type="GO" id="GO:0006515">
    <property type="term" value="P:protein quality control for misfolded or incompletely synthesized proteins"/>
    <property type="evidence" value="ECO:0007669"/>
    <property type="project" value="TreeGrafter"/>
</dbReference>
<dbReference type="CDD" id="cd07017">
    <property type="entry name" value="S14_ClpP_2"/>
    <property type="match status" value="1"/>
</dbReference>
<dbReference type="FunFam" id="3.90.226.10:FF:000001">
    <property type="entry name" value="ATP-dependent Clp protease proteolytic subunit"/>
    <property type="match status" value="1"/>
</dbReference>
<dbReference type="Gene3D" id="3.90.226.10">
    <property type="entry name" value="2-enoyl-CoA Hydratase, Chain A, domain 1"/>
    <property type="match status" value="1"/>
</dbReference>
<dbReference type="HAMAP" id="MF_00444">
    <property type="entry name" value="ClpP"/>
    <property type="match status" value="1"/>
</dbReference>
<dbReference type="InterPro" id="IPR001907">
    <property type="entry name" value="ClpP"/>
</dbReference>
<dbReference type="InterPro" id="IPR029045">
    <property type="entry name" value="ClpP/crotonase-like_dom_sf"/>
</dbReference>
<dbReference type="InterPro" id="IPR023562">
    <property type="entry name" value="ClpP/TepA"/>
</dbReference>
<dbReference type="InterPro" id="IPR033135">
    <property type="entry name" value="ClpP_His_AS"/>
</dbReference>
<dbReference type="NCBIfam" id="TIGR00493">
    <property type="entry name" value="clpP"/>
    <property type="match status" value="1"/>
</dbReference>
<dbReference type="NCBIfam" id="NF001368">
    <property type="entry name" value="PRK00277.1"/>
    <property type="match status" value="1"/>
</dbReference>
<dbReference type="NCBIfam" id="NF009205">
    <property type="entry name" value="PRK12553.1"/>
    <property type="match status" value="1"/>
</dbReference>
<dbReference type="PANTHER" id="PTHR10381">
    <property type="entry name" value="ATP-DEPENDENT CLP PROTEASE PROTEOLYTIC SUBUNIT"/>
    <property type="match status" value="1"/>
</dbReference>
<dbReference type="PANTHER" id="PTHR10381:SF70">
    <property type="entry name" value="ATP-DEPENDENT CLP PROTEASE PROTEOLYTIC SUBUNIT"/>
    <property type="match status" value="1"/>
</dbReference>
<dbReference type="Pfam" id="PF00574">
    <property type="entry name" value="CLP_protease"/>
    <property type="match status" value="1"/>
</dbReference>
<dbReference type="PRINTS" id="PR00127">
    <property type="entry name" value="CLPPROTEASEP"/>
</dbReference>
<dbReference type="SUPFAM" id="SSF52096">
    <property type="entry name" value="ClpP/crotonase"/>
    <property type="match status" value="1"/>
</dbReference>
<dbReference type="PROSITE" id="PS00382">
    <property type="entry name" value="CLP_PROTEASE_HIS"/>
    <property type="match status" value="1"/>
</dbReference>
<evidence type="ECO:0000255" key="1">
    <source>
        <dbReference type="HAMAP-Rule" id="MF_00444"/>
    </source>
</evidence>
<accession>Q736T1</accession>
<name>CLPP1_BACC1</name>
<comment type="function">
    <text evidence="1">Cleaves peptides in various proteins in a process that requires ATP hydrolysis. Has a chymotrypsin-like activity. Plays a major role in the degradation of misfolded proteins.</text>
</comment>
<comment type="catalytic activity">
    <reaction evidence="1">
        <text>Hydrolysis of proteins to small peptides in the presence of ATP and magnesium. alpha-casein is the usual test substrate. In the absence of ATP, only oligopeptides shorter than five residues are hydrolyzed (such as succinyl-Leu-Tyr-|-NHMec, and Leu-Tyr-Leu-|-Tyr-Trp, in which cleavage of the -Tyr-|-Leu- and -Tyr-|-Trp bonds also occurs).</text>
        <dbReference type="EC" id="3.4.21.92"/>
    </reaction>
</comment>
<comment type="subunit">
    <text evidence="1">Fourteen ClpP subunits assemble into 2 heptameric rings which stack back to back to give a disk-like structure with a central cavity, resembling the structure of eukaryotic proteasomes.</text>
</comment>
<comment type="subcellular location">
    <subcellularLocation>
        <location evidence="1">Cytoplasm</location>
    </subcellularLocation>
</comment>
<comment type="similarity">
    <text evidence="1">Belongs to the peptidase S14 family.</text>
</comment>
<keyword id="KW-0963">Cytoplasm</keyword>
<keyword id="KW-0378">Hydrolase</keyword>
<keyword id="KW-0645">Protease</keyword>
<keyword id="KW-0720">Serine protease</keyword>
<organism>
    <name type="scientific">Bacillus cereus (strain ATCC 10987 / NRS 248)</name>
    <dbReference type="NCBI Taxonomy" id="222523"/>
    <lineage>
        <taxon>Bacteria</taxon>
        <taxon>Bacillati</taxon>
        <taxon>Bacillota</taxon>
        <taxon>Bacilli</taxon>
        <taxon>Bacillales</taxon>
        <taxon>Bacillaceae</taxon>
        <taxon>Bacillus</taxon>
        <taxon>Bacillus cereus group</taxon>
    </lineage>
</organism>
<reference key="1">
    <citation type="journal article" date="2004" name="Nucleic Acids Res.">
        <title>The genome sequence of Bacillus cereus ATCC 10987 reveals metabolic adaptations and a large plasmid related to Bacillus anthracis pXO1.</title>
        <authorList>
            <person name="Rasko D.A."/>
            <person name="Ravel J."/>
            <person name="Oekstad O.A."/>
            <person name="Helgason E."/>
            <person name="Cer R.Z."/>
            <person name="Jiang L."/>
            <person name="Shores K.A."/>
            <person name="Fouts D.E."/>
            <person name="Tourasse N.J."/>
            <person name="Angiuoli S.V."/>
            <person name="Kolonay J.F."/>
            <person name="Nelson W.C."/>
            <person name="Kolstoe A.-B."/>
            <person name="Fraser C.M."/>
            <person name="Read T.D."/>
        </authorList>
    </citation>
    <scope>NUCLEOTIDE SEQUENCE [LARGE SCALE GENOMIC DNA]</scope>
    <source>
        <strain>ATCC 10987 / NRS 248</strain>
    </source>
</reference>
<gene>
    <name evidence="1" type="primary">clpP1</name>
    <name type="ordered locus">BCE_2819</name>
</gene>
<proteinExistence type="inferred from homology"/>
<feature type="chain" id="PRO_0000179486" description="ATP-dependent Clp protease proteolytic subunit 1">
    <location>
        <begin position="1"/>
        <end position="193"/>
    </location>
</feature>
<feature type="active site" description="Nucleophile" evidence="1">
    <location>
        <position position="98"/>
    </location>
</feature>
<feature type="active site" evidence="1">
    <location>
        <position position="123"/>
    </location>
</feature>
<protein>
    <recommendedName>
        <fullName evidence="1">ATP-dependent Clp protease proteolytic subunit 1</fullName>
        <ecNumber evidence="1">3.4.21.92</ecNumber>
    </recommendedName>
    <alternativeName>
        <fullName evidence="1">Endopeptidase Clp 1</fullName>
    </alternativeName>
</protein>
<sequence length="193" mass="21198">MNAIPYVVEQTKLGERSYDIYSRLLKDRIIIIGSEINDQVASSVVAQLLFLEAEDAEKDIFLYINSPGGSTXAGFAILDXMNLIXPEVQTLCMGLAASFGALLLLAGAKGKRFALPNSEIMIHQPLGGVKGQATEIEITAKRILKLKHDINKIIADRTGQPIEKIAHDTERDYFMTAEEAKEYGIVDGVVEKK</sequence>